<protein>
    <recommendedName>
        <fullName evidence="7">Casein kinase II subunit beta-2</fullName>
        <shortName evidence="7">CK II beta-2</shortName>
    </recommendedName>
</protein>
<keyword id="KW-0025">Alternative splicing</keyword>
<keyword id="KW-0963">Cytoplasm</keyword>
<keyword id="KW-0539">Nucleus</keyword>
<keyword id="KW-0597">Phosphoprotein</keyword>
<keyword id="KW-1185">Reference proteome</keyword>
<name>CSK2C_ARATH</name>
<proteinExistence type="evidence at protein level"/>
<dbReference type="EMBL" id="U03984">
    <property type="protein sequence ID" value="AAA53234.1"/>
    <property type="molecule type" value="mRNA"/>
</dbReference>
<dbReference type="EMBL" id="Z97343">
    <property type="protein sequence ID" value="CAB10544.1"/>
    <property type="molecule type" value="Genomic_DNA"/>
</dbReference>
<dbReference type="EMBL" id="AL161546">
    <property type="protein sequence ID" value="CAB78767.1"/>
    <property type="molecule type" value="Genomic_DNA"/>
</dbReference>
<dbReference type="EMBL" id="CP002687">
    <property type="protein sequence ID" value="AEE83927.1"/>
    <property type="molecule type" value="Genomic_DNA"/>
</dbReference>
<dbReference type="EMBL" id="AK119067">
    <property type="protein sequence ID" value="BAC43643.1"/>
    <property type="molecule type" value="mRNA"/>
</dbReference>
<dbReference type="EMBL" id="BT005279">
    <property type="protein sequence ID" value="AAO63343.1"/>
    <property type="molecule type" value="mRNA"/>
</dbReference>
<dbReference type="EMBL" id="AY085899">
    <property type="protein sequence ID" value="AAM63111.1"/>
    <property type="molecule type" value="mRNA"/>
</dbReference>
<dbReference type="PIR" id="S47968">
    <property type="entry name" value="S47968"/>
</dbReference>
<dbReference type="RefSeq" id="NP_193499.1">
    <molecule id="P40229-1"/>
    <property type="nucleotide sequence ID" value="NM_117872.3"/>
</dbReference>
<dbReference type="SMR" id="P40229"/>
<dbReference type="BioGRID" id="12777">
    <property type="interactions" value="2"/>
</dbReference>
<dbReference type="FunCoup" id="P40229">
    <property type="interactions" value="4442"/>
</dbReference>
<dbReference type="IntAct" id="P40229">
    <property type="interactions" value="1"/>
</dbReference>
<dbReference type="STRING" id="3702.P40229"/>
<dbReference type="PaxDb" id="3702-AT4G17640.1"/>
<dbReference type="ProteomicsDB" id="224534">
    <molecule id="P40229-1"/>
</dbReference>
<dbReference type="EnsemblPlants" id="AT4G17640.1">
    <molecule id="P40229-1"/>
    <property type="protein sequence ID" value="AT4G17640.1"/>
    <property type="gene ID" value="AT4G17640"/>
</dbReference>
<dbReference type="GeneID" id="827484"/>
<dbReference type="Gramene" id="AT4G17640.1">
    <molecule id="P40229-1"/>
    <property type="protein sequence ID" value="AT4G17640.1"/>
    <property type="gene ID" value="AT4G17640"/>
</dbReference>
<dbReference type="KEGG" id="ath:AT4G17640"/>
<dbReference type="Araport" id="AT4G17640"/>
<dbReference type="TAIR" id="AT4G17640">
    <property type="gene designation" value="CKB2"/>
</dbReference>
<dbReference type="eggNOG" id="KOG3092">
    <property type="taxonomic scope" value="Eukaryota"/>
</dbReference>
<dbReference type="InParanoid" id="P40229"/>
<dbReference type="OrthoDB" id="3971593at2759"/>
<dbReference type="PhylomeDB" id="P40229"/>
<dbReference type="PRO" id="PR:P40229"/>
<dbReference type="Proteomes" id="UP000006548">
    <property type="component" value="Chromosome 4"/>
</dbReference>
<dbReference type="ExpressionAtlas" id="P40229">
    <property type="expression patterns" value="baseline and differential"/>
</dbReference>
<dbReference type="GO" id="GO:0005829">
    <property type="term" value="C:cytosol"/>
    <property type="evidence" value="ECO:0000314"/>
    <property type="project" value="UniProtKB"/>
</dbReference>
<dbReference type="GO" id="GO:0005634">
    <property type="term" value="C:nucleus"/>
    <property type="evidence" value="ECO:0000314"/>
    <property type="project" value="UniProtKB"/>
</dbReference>
<dbReference type="GO" id="GO:0005956">
    <property type="term" value="C:protein kinase CK2 complex"/>
    <property type="evidence" value="ECO:0007669"/>
    <property type="project" value="InterPro"/>
</dbReference>
<dbReference type="GO" id="GO:0019887">
    <property type="term" value="F:protein kinase regulator activity"/>
    <property type="evidence" value="ECO:0007669"/>
    <property type="project" value="InterPro"/>
</dbReference>
<dbReference type="FunFam" id="1.10.1820.10:FF:000002">
    <property type="entry name" value="Casein kinase II subunit beta"/>
    <property type="match status" value="1"/>
</dbReference>
<dbReference type="FunFam" id="2.20.25.20:FF:000003">
    <property type="entry name" value="Casein kinase II subunit beta"/>
    <property type="match status" value="1"/>
</dbReference>
<dbReference type="Gene3D" id="2.20.25.20">
    <property type="match status" value="1"/>
</dbReference>
<dbReference type="Gene3D" id="1.10.1820.10">
    <property type="entry name" value="protein kinase ck2 holoenzyme, chain C, domain 1"/>
    <property type="match status" value="1"/>
</dbReference>
<dbReference type="InterPro" id="IPR016149">
    <property type="entry name" value="Casein_kin_II_reg-sub_N"/>
</dbReference>
<dbReference type="InterPro" id="IPR035991">
    <property type="entry name" value="Casein_kinase_II_beta-like"/>
</dbReference>
<dbReference type="InterPro" id="IPR000704">
    <property type="entry name" value="Casein_kinase_II_reg-sub"/>
</dbReference>
<dbReference type="PANTHER" id="PTHR11740">
    <property type="entry name" value="CASEIN KINASE II SUBUNIT BETA"/>
    <property type="match status" value="1"/>
</dbReference>
<dbReference type="PANTHER" id="PTHR11740:SF43">
    <property type="entry name" value="CASEIN KINASE II SUBUNIT BETA-2"/>
    <property type="match status" value="1"/>
</dbReference>
<dbReference type="Pfam" id="PF01214">
    <property type="entry name" value="CK_II_beta"/>
    <property type="match status" value="1"/>
</dbReference>
<dbReference type="PRINTS" id="PR00472">
    <property type="entry name" value="CASNKINASEII"/>
</dbReference>
<dbReference type="SMART" id="SM01085">
    <property type="entry name" value="CK_II_beta"/>
    <property type="match status" value="1"/>
</dbReference>
<dbReference type="SUPFAM" id="SSF57798">
    <property type="entry name" value="Casein kinase II beta subunit"/>
    <property type="match status" value="1"/>
</dbReference>
<dbReference type="PROSITE" id="PS01101">
    <property type="entry name" value="CK2_BETA"/>
    <property type="match status" value="1"/>
</dbReference>
<organism>
    <name type="scientific">Arabidopsis thaliana</name>
    <name type="common">Mouse-ear cress</name>
    <dbReference type="NCBI Taxonomy" id="3702"/>
    <lineage>
        <taxon>Eukaryota</taxon>
        <taxon>Viridiplantae</taxon>
        <taxon>Streptophyta</taxon>
        <taxon>Embryophyta</taxon>
        <taxon>Tracheophyta</taxon>
        <taxon>Spermatophyta</taxon>
        <taxon>Magnoliopsida</taxon>
        <taxon>eudicotyledons</taxon>
        <taxon>Gunneridae</taxon>
        <taxon>Pentapetalae</taxon>
        <taxon>rosids</taxon>
        <taxon>malvids</taxon>
        <taxon>Brassicales</taxon>
        <taxon>Brassicaceae</taxon>
        <taxon>Camelineae</taxon>
        <taxon>Arabidopsis</taxon>
    </lineage>
</organism>
<evidence type="ECO:0000250" key="1"/>
<evidence type="ECO:0000256" key="2">
    <source>
        <dbReference type="SAM" id="MobiDB-lite"/>
    </source>
</evidence>
<evidence type="ECO:0000269" key="3">
    <source>
    </source>
</evidence>
<evidence type="ECO:0000269" key="4">
    <source>
    </source>
</evidence>
<evidence type="ECO:0000269" key="5">
    <source>
    </source>
</evidence>
<evidence type="ECO:0000269" key="6">
    <source>
    </source>
</evidence>
<evidence type="ECO:0000305" key="7"/>
<comment type="function">
    <text evidence="4 5">Plays a complex role in regulating the basal catalytic activity of the alpha subunit. The tetrameric holoenzyme CK2, composed of two alpha and two beta subunits, phosphorylates the transcription factor PIF1 after an exposure to light, resulting in a proteasome-dependent degradation of PIF1 and promotion of photomorphogenesis (PubMed:21330376). CK2 phosphorylates translation initiation factors. May participate in the regulation of the initiation of translation (PubMed:19509278).</text>
</comment>
<comment type="subunit">
    <text evidence="4 6">Heterotetramer of two catalytic alpha subunits and two regulatory beta subunits (PubMed:19509278). Interacts with CCA1 (PubMed:9724822).</text>
</comment>
<comment type="subcellular location">
    <subcellularLocation>
        <location evidence="3">Cytoplasm</location>
        <location evidence="3">Cytosol</location>
    </subcellularLocation>
    <subcellularLocation>
        <location evidence="3">Nucleus</location>
    </subcellularLocation>
</comment>
<comment type="alternative products">
    <event type="alternative splicing"/>
    <isoform>
        <id>P40229-1</id>
        <name>1</name>
        <sequence type="displayed"/>
    </isoform>
    <text>A number of isoforms are produced. According to EST sequences.</text>
</comment>
<comment type="PTM">
    <text evidence="1">Phosphorylated by alpha subunit.</text>
</comment>
<comment type="similarity">
    <text evidence="7">Belongs to the casein kinase 2 subunit beta family.</text>
</comment>
<feature type="chain" id="PRO_0000068249" description="Casein kinase II subunit beta-2">
    <location>
        <begin position="1"/>
        <end position="282"/>
    </location>
</feature>
<feature type="region of interest" description="Disordered" evidence="2">
    <location>
        <begin position="1"/>
        <end position="92"/>
    </location>
</feature>
<feature type="compositionally biased region" description="Basic and acidic residues" evidence="2">
    <location>
        <begin position="13"/>
        <end position="28"/>
    </location>
</feature>
<feature type="compositionally biased region" description="Polar residues" evidence="2">
    <location>
        <begin position="29"/>
        <end position="47"/>
    </location>
</feature>
<feature type="compositionally biased region" description="Polar residues" evidence="2">
    <location>
        <begin position="61"/>
        <end position="71"/>
    </location>
</feature>
<feature type="compositionally biased region" description="Acidic residues" evidence="2">
    <location>
        <begin position="75"/>
        <end position="92"/>
    </location>
</feature>
<reference key="1">
    <citation type="journal article" date="1994" name="Plant Mol. Biol.">
        <title>Isolation of an Arabidopsis thaliana casein kinase II beta subunit by complementation in Saccharomyces cerevisiae.</title>
        <authorList>
            <person name="Collinge M.A."/>
            <person name="Walker J.C."/>
        </authorList>
    </citation>
    <scope>NUCLEOTIDE SEQUENCE [MRNA]</scope>
</reference>
<reference key="2">
    <citation type="journal article" date="1998" name="Nature">
        <title>Analysis of 1.9 Mb of contiguous sequence from chromosome 4 of Arabidopsis thaliana.</title>
        <authorList>
            <person name="Bevan M."/>
            <person name="Bancroft I."/>
            <person name="Bent E."/>
            <person name="Love K."/>
            <person name="Goodman H.M."/>
            <person name="Dean C."/>
            <person name="Bergkamp R."/>
            <person name="Dirkse W."/>
            <person name="van Staveren M."/>
            <person name="Stiekema W."/>
            <person name="Drost L."/>
            <person name="Ridley P."/>
            <person name="Hudson S.-A."/>
            <person name="Patel K."/>
            <person name="Murphy G."/>
            <person name="Piffanelli P."/>
            <person name="Wedler H."/>
            <person name="Wedler E."/>
            <person name="Wambutt R."/>
            <person name="Weitzenegger T."/>
            <person name="Pohl T."/>
            <person name="Terryn N."/>
            <person name="Gielen J."/>
            <person name="Villarroel R."/>
            <person name="De Clercq R."/>
            <person name="van Montagu M."/>
            <person name="Lecharny A."/>
            <person name="Aubourg S."/>
            <person name="Gy I."/>
            <person name="Kreis M."/>
            <person name="Lao N."/>
            <person name="Kavanagh T."/>
            <person name="Hempel S."/>
            <person name="Kotter P."/>
            <person name="Entian K.-D."/>
            <person name="Rieger M."/>
            <person name="Schaefer M."/>
            <person name="Funk B."/>
            <person name="Mueller-Auer S."/>
            <person name="Silvey M."/>
            <person name="James R."/>
            <person name="Monfort A."/>
            <person name="Pons A."/>
            <person name="Puigdomenech P."/>
            <person name="Douka A."/>
            <person name="Voukelatou E."/>
            <person name="Milioni D."/>
            <person name="Hatzopoulos P."/>
            <person name="Piravandi E."/>
            <person name="Obermaier B."/>
            <person name="Hilbert H."/>
            <person name="Duesterhoeft A."/>
            <person name="Moores T."/>
            <person name="Jones J.D.G."/>
            <person name="Eneva T."/>
            <person name="Palme K."/>
            <person name="Benes V."/>
            <person name="Rechmann S."/>
            <person name="Ansorge W."/>
            <person name="Cooke R."/>
            <person name="Berger C."/>
            <person name="Delseny M."/>
            <person name="Voet M."/>
            <person name="Volckaert G."/>
            <person name="Mewes H.-W."/>
            <person name="Klosterman S."/>
            <person name="Schueller C."/>
            <person name="Chalwatzis N."/>
        </authorList>
    </citation>
    <scope>NUCLEOTIDE SEQUENCE [LARGE SCALE GENOMIC DNA]</scope>
    <source>
        <strain>cv. Columbia</strain>
    </source>
</reference>
<reference key="3">
    <citation type="journal article" date="1999" name="Nature">
        <title>Sequence and analysis of chromosome 4 of the plant Arabidopsis thaliana.</title>
        <authorList>
            <person name="Mayer K.F.X."/>
            <person name="Schueller C."/>
            <person name="Wambutt R."/>
            <person name="Murphy G."/>
            <person name="Volckaert G."/>
            <person name="Pohl T."/>
            <person name="Duesterhoeft A."/>
            <person name="Stiekema W."/>
            <person name="Entian K.-D."/>
            <person name="Terryn N."/>
            <person name="Harris B."/>
            <person name="Ansorge W."/>
            <person name="Brandt P."/>
            <person name="Grivell L.A."/>
            <person name="Rieger M."/>
            <person name="Weichselgartner M."/>
            <person name="de Simone V."/>
            <person name="Obermaier B."/>
            <person name="Mache R."/>
            <person name="Mueller M."/>
            <person name="Kreis M."/>
            <person name="Delseny M."/>
            <person name="Puigdomenech P."/>
            <person name="Watson M."/>
            <person name="Schmidtheini T."/>
            <person name="Reichert B."/>
            <person name="Portetelle D."/>
            <person name="Perez-Alonso M."/>
            <person name="Boutry M."/>
            <person name="Bancroft I."/>
            <person name="Vos P."/>
            <person name="Hoheisel J."/>
            <person name="Zimmermann W."/>
            <person name="Wedler H."/>
            <person name="Ridley P."/>
            <person name="Langham S.-A."/>
            <person name="McCullagh B."/>
            <person name="Bilham L."/>
            <person name="Robben J."/>
            <person name="van der Schueren J."/>
            <person name="Grymonprez B."/>
            <person name="Chuang Y.-J."/>
            <person name="Vandenbussche F."/>
            <person name="Braeken M."/>
            <person name="Weltjens I."/>
            <person name="Voet M."/>
            <person name="Bastiaens I."/>
            <person name="Aert R."/>
            <person name="Defoor E."/>
            <person name="Weitzenegger T."/>
            <person name="Bothe G."/>
            <person name="Ramsperger U."/>
            <person name="Hilbert H."/>
            <person name="Braun M."/>
            <person name="Holzer E."/>
            <person name="Brandt A."/>
            <person name="Peters S."/>
            <person name="van Staveren M."/>
            <person name="Dirkse W."/>
            <person name="Mooijman P."/>
            <person name="Klein Lankhorst R."/>
            <person name="Rose M."/>
            <person name="Hauf J."/>
            <person name="Koetter P."/>
            <person name="Berneiser S."/>
            <person name="Hempel S."/>
            <person name="Feldpausch M."/>
            <person name="Lamberth S."/>
            <person name="Van den Daele H."/>
            <person name="De Keyser A."/>
            <person name="Buysshaert C."/>
            <person name="Gielen J."/>
            <person name="Villarroel R."/>
            <person name="De Clercq R."/>
            <person name="van Montagu M."/>
            <person name="Rogers J."/>
            <person name="Cronin A."/>
            <person name="Quail M.A."/>
            <person name="Bray-Allen S."/>
            <person name="Clark L."/>
            <person name="Doggett J."/>
            <person name="Hall S."/>
            <person name="Kay M."/>
            <person name="Lennard N."/>
            <person name="McLay K."/>
            <person name="Mayes R."/>
            <person name="Pettett A."/>
            <person name="Rajandream M.A."/>
            <person name="Lyne M."/>
            <person name="Benes V."/>
            <person name="Rechmann S."/>
            <person name="Borkova D."/>
            <person name="Bloecker H."/>
            <person name="Scharfe M."/>
            <person name="Grimm M."/>
            <person name="Loehnert T.-H."/>
            <person name="Dose S."/>
            <person name="de Haan M."/>
            <person name="Maarse A.C."/>
            <person name="Schaefer M."/>
            <person name="Mueller-Auer S."/>
            <person name="Gabel C."/>
            <person name="Fuchs M."/>
            <person name="Fartmann B."/>
            <person name="Granderath K."/>
            <person name="Dauner D."/>
            <person name="Herzl A."/>
            <person name="Neumann S."/>
            <person name="Argiriou A."/>
            <person name="Vitale D."/>
            <person name="Liguori R."/>
            <person name="Piravandi E."/>
            <person name="Massenet O."/>
            <person name="Quigley F."/>
            <person name="Clabauld G."/>
            <person name="Muendlein A."/>
            <person name="Felber R."/>
            <person name="Schnabl S."/>
            <person name="Hiller R."/>
            <person name="Schmidt W."/>
            <person name="Lecharny A."/>
            <person name="Aubourg S."/>
            <person name="Chefdor F."/>
            <person name="Cooke R."/>
            <person name="Berger C."/>
            <person name="Monfort A."/>
            <person name="Casacuberta E."/>
            <person name="Gibbons T."/>
            <person name="Weber N."/>
            <person name="Vandenbol M."/>
            <person name="Bargues M."/>
            <person name="Terol J."/>
            <person name="Torres A."/>
            <person name="Perez-Perez A."/>
            <person name="Purnelle B."/>
            <person name="Bent E."/>
            <person name="Johnson S."/>
            <person name="Tacon D."/>
            <person name="Jesse T."/>
            <person name="Heijnen L."/>
            <person name="Schwarz S."/>
            <person name="Scholler P."/>
            <person name="Heber S."/>
            <person name="Francs P."/>
            <person name="Bielke C."/>
            <person name="Frishman D."/>
            <person name="Haase D."/>
            <person name="Lemcke K."/>
            <person name="Mewes H.-W."/>
            <person name="Stocker S."/>
            <person name="Zaccaria P."/>
            <person name="Bevan M."/>
            <person name="Wilson R.K."/>
            <person name="de la Bastide M."/>
            <person name="Habermann K."/>
            <person name="Parnell L."/>
            <person name="Dedhia N."/>
            <person name="Gnoj L."/>
            <person name="Schutz K."/>
            <person name="Huang E."/>
            <person name="Spiegel L."/>
            <person name="Sekhon M."/>
            <person name="Murray J."/>
            <person name="Sheet P."/>
            <person name="Cordes M."/>
            <person name="Abu-Threideh J."/>
            <person name="Stoneking T."/>
            <person name="Kalicki J."/>
            <person name="Graves T."/>
            <person name="Harmon G."/>
            <person name="Edwards J."/>
            <person name="Latreille P."/>
            <person name="Courtney L."/>
            <person name="Cloud J."/>
            <person name="Abbott A."/>
            <person name="Scott K."/>
            <person name="Johnson D."/>
            <person name="Minx P."/>
            <person name="Bentley D."/>
            <person name="Fulton B."/>
            <person name="Miller N."/>
            <person name="Greco T."/>
            <person name="Kemp K."/>
            <person name="Kramer J."/>
            <person name="Fulton L."/>
            <person name="Mardis E."/>
            <person name="Dante M."/>
            <person name="Pepin K."/>
            <person name="Hillier L.W."/>
            <person name="Nelson J."/>
            <person name="Spieth J."/>
            <person name="Ryan E."/>
            <person name="Andrews S."/>
            <person name="Geisel C."/>
            <person name="Layman D."/>
            <person name="Du H."/>
            <person name="Ali J."/>
            <person name="Berghoff A."/>
            <person name="Jones K."/>
            <person name="Drone K."/>
            <person name="Cotton M."/>
            <person name="Joshu C."/>
            <person name="Antonoiu B."/>
            <person name="Zidanic M."/>
            <person name="Strong C."/>
            <person name="Sun H."/>
            <person name="Lamar B."/>
            <person name="Yordan C."/>
            <person name="Ma P."/>
            <person name="Zhong J."/>
            <person name="Preston R."/>
            <person name="Vil D."/>
            <person name="Shekher M."/>
            <person name="Matero A."/>
            <person name="Shah R."/>
            <person name="Swaby I.K."/>
            <person name="O'Shaughnessy A."/>
            <person name="Rodriguez M."/>
            <person name="Hoffman J."/>
            <person name="Till S."/>
            <person name="Granat S."/>
            <person name="Shohdy N."/>
            <person name="Hasegawa A."/>
            <person name="Hameed A."/>
            <person name="Lodhi M."/>
            <person name="Johnson A."/>
            <person name="Chen E."/>
            <person name="Marra M.A."/>
            <person name="Martienssen R."/>
            <person name="McCombie W.R."/>
        </authorList>
    </citation>
    <scope>NUCLEOTIDE SEQUENCE [LARGE SCALE GENOMIC DNA]</scope>
    <source>
        <strain>cv. Columbia</strain>
    </source>
</reference>
<reference key="4">
    <citation type="journal article" date="2017" name="Plant J.">
        <title>Araport11: a complete reannotation of the Arabidopsis thaliana reference genome.</title>
        <authorList>
            <person name="Cheng C.Y."/>
            <person name="Krishnakumar V."/>
            <person name="Chan A.P."/>
            <person name="Thibaud-Nissen F."/>
            <person name="Schobel S."/>
            <person name="Town C.D."/>
        </authorList>
    </citation>
    <scope>GENOME REANNOTATION</scope>
    <source>
        <strain>cv. Columbia</strain>
    </source>
</reference>
<reference key="5">
    <citation type="journal article" date="2002" name="Science">
        <title>Functional annotation of a full-length Arabidopsis cDNA collection.</title>
        <authorList>
            <person name="Seki M."/>
            <person name="Narusaka M."/>
            <person name="Kamiya A."/>
            <person name="Ishida J."/>
            <person name="Satou M."/>
            <person name="Sakurai T."/>
            <person name="Nakajima M."/>
            <person name="Enju A."/>
            <person name="Akiyama K."/>
            <person name="Oono Y."/>
            <person name="Muramatsu M."/>
            <person name="Hayashizaki Y."/>
            <person name="Kawai J."/>
            <person name="Carninci P."/>
            <person name="Itoh M."/>
            <person name="Ishii Y."/>
            <person name="Arakawa T."/>
            <person name="Shibata K."/>
            <person name="Shinagawa A."/>
            <person name="Shinozaki K."/>
        </authorList>
    </citation>
    <scope>NUCLEOTIDE SEQUENCE [LARGE SCALE MRNA]</scope>
    <source>
        <strain>cv. Columbia</strain>
    </source>
</reference>
<reference key="6">
    <citation type="journal article" date="2003" name="Science">
        <title>Empirical analysis of transcriptional activity in the Arabidopsis genome.</title>
        <authorList>
            <person name="Yamada K."/>
            <person name="Lim J."/>
            <person name="Dale J.M."/>
            <person name="Chen H."/>
            <person name="Shinn P."/>
            <person name="Palm C.J."/>
            <person name="Southwick A.M."/>
            <person name="Wu H.C."/>
            <person name="Kim C.J."/>
            <person name="Nguyen M."/>
            <person name="Pham P.K."/>
            <person name="Cheuk R.F."/>
            <person name="Karlin-Newmann G."/>
            <person name="Liu S.X."/>
            <person name="Lam B."/>
            <person name="Sakano H."/>
            <person name="Wu T."/>
            <person name="Yu G."/>
            <person name="Miranda M."/>
            <person name="Quach H.L."/>
            <person name="Tripp M."/>
            <person name="Chang C.H."/>
            <person name="Lee J.M."/>
            <person name="Toriumi M.J."/>
            <person name="Chan M.M."/>
            <person name="Tang C.C."/>
            <person name="Onodera C.S."/>
            <person name="Deng J.M."/>
            <person name="Akiyama K."/>
            <person name="Ansari Y."/>
            <person name="Arakawa T."/>
            <person name="Banh J."/>
            <person name="Banno F."/>
            <person name="Bowser L."/>
            <person name="Brooks S.Y."/>
            <person name="Carninci P."/>
            <person name="Chao Q."/>
            <person name="Choy N."/>
            <person name="Enju A."/>
            <person name="Goldsmith A.D."/>
            <person name="Gurjal M."/>
            <person name="Hansen N.F."/>
            <person name="Hayashizaki Y."/>
            <person name="Johnson-Hopson C."/>
            <person name="Hsuan V.W."/>
            <person name="Iida K."/>
            <person name="Karnes M."/>
            <person name="Khan S."/>
            <person name="Koesema E."/>
            <person name="Ishida J."/>
            <person name="Jiang P.X."/>
            <person name="Jones T."/>
            <person name="Kawai J."/>
            <person name="Kamiya A."/>
            <person name="Meyers C."/>
            <person name="Nakajima M."/>
            <person name="Narusaka M."/>
            <person name="Seki M."/>
            <person name="Sakurai T."/>
            <person name="Satou M."/>
            <person name="Tamse R."/>
            <person name="Vaysberg M."/>
            <person name="Wallender E.K."/>
            <person name="Wong C."/>
            <person name="Yamamura Y."/>
            <person name="Yuan S."/>
            <person name="Shinozaki K."/>
            <person name="Davis R.W."/>
            <person name="Theologis A."/>
            <person name="Ecker J.R."/>
        </authorList>
    </citation>
    <scope>NUCLEOTIDE SEQUENCE [LARGE SCALE MRNA]</scope>
    <source>
        <strain>cv. Columbia</strain>
    </source>
</reference>
<reference key="7">
    <citation type="submission" date="2002-03" db="EMBL/GenBank/DDBJ databases">
        <title>Full-length cDNA from Arabidopsis thaliana.</title>
        <authorList>
            <person name="Brover V.V."/>
            <person name="Troukhan M.E."/>
            <person name="Alexandrov N.A."/>
            <person name="Lu Y.-P."/>
            <person name="Flavell R.B."/>
            <person name="Feldmann K.A."/>
        </authorList>
    </citation>
    <scope>NUCLEOTIDE SEQUENCE [LARGE SCALE MRNA]</scope>
</reference>
<reference key="8">
    <citation type="journal article" date="1998" name="Proc. Natl. Acad. Sci. U.S.A.">
        <title>Protein kinase CK2 interacts with and phosphorylates the Arabidopsis circadian clock-associated 1 protein.</title>
        <authorList>
            <person name="Sugano S."/>
            <person name="Andronis C."/>
            <person name="Green R.M."/>
            <person name="Wang Z.-Y."/>
            <person name="Tobin E.M."/>
        </authorList>
    </citation>
    <scope>INTERACTION WITH CCA1</scope>
</reference>
<reference key="9">
    <citation type="journal article" date="2006" name="Plant Cell Physiol.">
        <title>An extensive survey of CK2 alpha and beta subunits in Arabidopsis: multiple isoforms exhibit differential subcellular localization.</title>
        <authorList>
            <person name="Salinas P."/>
            <person name="Fuentes D."/>
            <person name="Vidal E."/>
            <person name="Jordana X."/>
            <person name="Echeverria M."/>
            <person name="Holuigue L."/>
        </authorList>
    </citation>
    <scope>SUBCELLULAR LOCATION</scope>
</reference>
<reference key="10">
    <citation type="journal article" date="2009" name="J. Biol. Chem.">
        <title>Differential phosphorylation of plant translation initiation factors by Arabidopsis thaliana CK2 holoenzymes.</title>
        <authorList>
            <person name="Dennis M.D."/>
            <person name="Browning K.S."/>
        </authorList>
    </citation>
    <scope>FUNCTION</scope>
    <scope>SUBUNIT</scope>
</reference>
<reference key="11">
    <citation type="journal article" date="2011" name="J. Biol. Chem.">
        <title>Phosphorylation by CK2 enhances the rapid light-induced degradation of phytochrome interacting factor 1 in Arabidopsis.</title>
        <authorList>
            <person name="Bu Q."/>
            <person name="Zhu L."/>
            <person name="Dennis M.D."/>
            <person name="Yu L."/>
            <person name="Lu S.X."/>
            <person name="Person M.D."/>
            <person name="Tobin E.M."/>
            <person name="Browning K.S."/>
            <person name="Huq E."/>
        </authorList>
    </citation>
    <scope>FUNCTION</scope>
</reference>
<sequence>MYRERGMVGSKSEVVDRKRINEIHDNRPSHSMSQPVNGKGKVTSTSVLMGKQQLHDKESSRSGSISKTNISDAVDISDTDSEESEVSGSDGEDTSWISWFCNLRGNEFFCEVDDDYIQDDFNLCGLSHQVPYYDYALDLILDVESSHGEMFTEEQNELIESAAEMLYGMIHARFILTSKGLASMLDKYKNYDFGRCPRVYCCGQPCLPVGQSDIPRASTVKIYCPKCEDVYYPRSKYQGNIDGAYFGTTFPHLFLMTYGHLKPQKASQSYTQRVFGFKLHKP</sequence>
<gene>
    <name type="primary">CKB2</name>
    <name type="ordered locus">At4g17640</name>
    <name type="ORF">dl4855w</name>
</gene>
<accession>P40229</accession>
<accession>Q541V5</accession>